<feature type="chain" id="PRO_1000198752" description="Tryptophan synthase beta chain">
    <location>
        <begin position="1"/>
        <end position="406"/>
    </location>
</feature>
<feature type="modified residue" description="N6-(pyridoxal phosphate)lysine" evidence="1">
    <location>
        <position position="99"/>
    </location>
</feature>
<dbReference type="EC" id="4.2.1.20" evidence="1"/>
<dbReference type="EMBL" id="CP001389">
    <property type="protein sequence ID" value="ACP27108.1"/>
    <property type="molecule type" value="Genomic_DNA"/>
</dbReference>
<dbReference type="RefSeq" id="WP_012709855.1">
    <property type="nucleotide sequence ID" value="NC_012587.1"/>
</dbReference>
<dbReference type="RefSeq" id="YP_002827861.1">
    <property type="nucleotide sequence ID" value="NC_012587.1"/>
</dbReference>
<dbReference type="SMR" id="C3MB99"/>
<dbReference type="STRING" id="394.NGR_c33780"/>
<dbReference type="KEGG" id="rhi:NGR_c33780"/>
<dbReference type="PATRIC" id="fig|394.7.peg.6226"/>
<dbReference type="eggNOG" id="COG0133">
    <property type="taxonomic scope" value="Bacteria"/>
</dbReference>
<dbReference type="HOGENOM" id="CLU_016734_3_1_5"/>
<dbReference type="OrthoDB" id="9766131at2"/>
<dbReference type="UniPathway" id="UPA00035">
    <property type="reaction ID" value="UER00044"/>
</dbReference>
<dbReference type="Proteomes" id="UP000001054">
    <property type="component" value="Chromosome"/>
</dbReference>
<dbReference type="GO" id="GO:0005737">
    <property type="term" value="C:cytoplasm"/>
    <property type="evidence" value="ECO:0007669"/>
    <property type="project" value="TreeGrafter"/>
</dbReference>
<dbReference type="GO" id="GO:0004834">
    <property type="term" value="F:tryptophan synthase activity"/>
    <property type="evidence" value="ECO:0007669"/>
    <property type="project" value="UniProtKB-UniRule"/>
</dbReference>
<dbReference type="CDD" id="cd06446">
    <property type="entry name" value="Trp-synth_B"/>
    <property type="match status" value="1"/>
</dbReference>
<dbReference type="FunFam" id="3.40.50.1100:FF:000001">
    <property type="entry name" value="Tryptophan synthase beta chain"/>
    <property type="match status" value="1"/>
</dbReference>
<dbReference type="FunFam" id="3.40.50.1100:FF:000004">
    <property type="entry name" value="Tryptophan synthase beta chain"/>
    <property type="match status" value="1"/>
</dbReference>
<dbReference type="Gene3D" id="3.40.50.1100">
    <property type="match status" value="2"/>
</dbReference>
<dbReference type="HAMAP" id="MF_00133">
    <property type="entry name" value="Trp_synth_beta"/>
    <property type="match status" value="1"/>
</dbReference>
<dbReference type="InterPro" id="IPR006653">
    <property type="entry name" value="Trp_synth_b_CS"/>
</dbReference>
<dbReference type="InterPro" id="IPR006654">
    <property type="entry name" value="Trp_synth_beta"/>
</dbReference>
<dbReference type="InterPro" id="IPR023026">
    <property type="entry name" value="Trp_synth_beta/beta-like"/>
</dbReference>
<dbReference type="InterPro" id="IPR001926">
    <property type="entry name" value="TrpB-like_PALP"/>
</dbReference>
<dbReference type="InterPro" id="IPR036052">
    <property type="entry name" value="TrpB-like_PALP_sf"/>
</dbReference>
<dbReference type="NCBIfam" id="TIGR00263">
    <property type="entry name" value="trpB"/>
    <property type="match status" value="1"/>
</dbReference>
<dbReference type="PANTHER" id="PTHR48077:SF3">
    <property type="entry name" value="TRYPTOPHAN SYNTHASE"/>
    <property type="match status" value="1"/>
</dbReference>
<dbReference type="PANTHER" id="PTHR48077">
    <property type="entry name" value="TRYPTOPHAN SYNTHASE-RELATED"/>
    <property type="match status" value="1"/>
</dbReference>
<dbReference type="Pfam" id="PF00291">
    <property type="entry name" value="PALP"/>
    <property type="match status" value="1"/>
</dbReference>
<dbReference type="PIRSF" id="PIRSF001413">
    <property type="entry name" value="Trp_syn_beta"/>
    <property type="match status" value="1"/>
</dbReference>
<dbReference type="SUPFAM" id="SSF53686">
    <property type="entry name" value="Tryptophan synthase beta subunit-like PLP-dependent enzymes"/>
    <property type="match status" value="1"/>
</dbReference>
<dbReference type="PROSITE" id="PS00168">
    <property type="entry name" value="TRP_SYNTHASE_BETA"/>
    <property type="match status" value="1"/>
</dbReference>
<organism>
    <name type="scientific">Sinorhizobium fredii (strain NBRC 101917 / NGR234)</name>
    <dbReference type="NCBI Taxonomy" id="394"/>
    <lineage>
        <taxon>Bacteria</taxon>
        <taxon>Pseudomonadati</taxon>
        <taxon>Pseudomonadota</taxon>
        <taxon>Alphaproteobacteria</taxon>
        <taxon>Hyphomicrobiales</taxon>
        <taxon>Rhizobiaceae</taxon>
        <taxon>Sinorhizobium/Ensifer group</taxon>
        <taxon>Sinorhizobium</taxon>
    </lineage>
</organism>
<comment type="function">
    <text evidence="1">The beta subunit is responsible for the synthesis of L-tryptophan from indole and L-serine.</text>
</comment>
<comment type="catalytic activity">
    <reaction evidence="1">
        <text>(1S,2R)-1-C-(indol-3-yl)glycerol 3-phosphate + L-serine = D-glyceraldehyde 3-phosphate + L-tryptophan + H2O</text>
        <dbReference type="Rhea" id="RHEA:10532"/>
        <dbReference type="ChEBI" id="CHEBI:15377"/>
        <dbReference type="ChEBI" id="CHEBI:33384"/>
        <dbReference type="ChEBI" id="CHEBI:57912"/>
        <dbReference type="ChEBI" id="CHEBI:58866"/>
        <dbReference type="ChEBI" id="CHEBI:59776"/>
        <dbReference type="EC" id="4.2.1.20"/>
    </reaction>
</comment>
<comment type="cofactor">
    <cofactor evidence="1">
        <name>pyridoxal 5'-phosphate</name>
        <dbReference type="ChEBI" id="CHEBI:597326"/>
    </cofactor>
</comment>
<comment type="pathway">
    <text evidence="1">Amino-acid biosynthesis; L-tryptophan biosynthesis; L-tryptophan from chorismate: step 5/5.</text>
</comment>
<comment type="subunit">
    <text evidence="1">Tetramer of two alpha and two beta chains.</text>
</comment>
<comment type="similarity">
    <text evidence="1">Belongs to the TrpB family.</text>
</comment>
<name>TRPB_SINFN</name>
<gene>
    <name evidence="1" type="primary">trpB</name>
    <name type="ordered locus">NGR_c33780</name>
</gene>
<accession>C3MB99</accession>
<sequence length="406" mass="43690">MNQPLKPNSFRAGPDEDGRFGIFGGRFVAETLMPLILDLQDEWNKAKNDPVFKAELEKLGAHYIGRPSPLYFAERLTAELGGAKIYFKREELNHTGSHKINNCIGQILLAKRMGKTRIIAETGAGQHGVASATVAARFGLPCVVYMGATDVERQAPNVFRMKLLGAEVKPVTAGHGTLKDAMNEALRDWVTNVDSTYYLIGTAAGPHPYPEMVRDFQAVIGQEAKEQLLAAEGRLPDLVVAAVGGGSNAIGIFHPFLDDDGVRIVGVEAGGKGLDGDEHCASITAGSPGVLHGNRTYLLQDGDGQIKEGHSISAGLDYPGIGPEHAWLNDIGRVEYVPIMDHEALEAFQTLTRLEGIIPALEPSHALAEVIKRAPKMGKDEIILMNLSGRGDKDIFTVGKILGMGQ</sequence>
<proteinExistence type="inferred from homology"/>
<keyword id="KW-0028">Amino-acid biosynthesis</keyword>
<keyword id="KW-0057">Aromatic amino acid biosynthesis</keyword>
<keyword id="KW-0456">Lyase</keyword>
<keyword id="KW-0663">Pyridoxal phosphate</keyword>
<keyword id="KW-1185">Reference proteome</keyword>
<keyword id="KW-0822">Tryptophan biosynthesis</keyword>
<evidence type="ECO:0000255" key="1">
    <source>
        <dbReference type="HAMAP-Rule" id="MF_00133"/>
    </source>
</evidence>
<protein>
    <recommendedName>
        <fullName evidence="1">Tryptophan synthase beta chain</fullName>
        <ecNumber evidence="1">4.2.1.20</ecNumber>
    </recommendedName>
</protein>
<reference key="1">
    <citation type="journal article" date="2009" name="Appl. Environ. Microbiol.">
        <title>Rhizobium sp. strain NGR234 possesses a remarkable number of secretion systems.</title>
        <authorList>
            <person name="Schmeisser C."/>
            <person name="Liesegang H."/>
            <person name="Krysciak D."/>
            <person name="Bakkou N."/>
            <person name="Le Quere A."/>
            <person name="Wollherr A."/>
            <person name="Heinemeyer I."/>
            <person name="Morgenstern B."/>
            <person name="Pommerening-Roeser A."/>
            <person name="Flores M."/>
            <person name="Palacios R."/>
            <person name="Brenner S."/>
            <person name="Gottschalk G."/>
            <person name="Schmitz R.A."/>
            <person name="Broughton W.J."/>
            <person name="Perret X."/>
            <person name="Strittmatter A.W."/>
            <person name="Streit W.R."/>
        </authorList>
    </citation>
    <scope>NUCLEOTIDE SEQUENCE [LARGE SCALE GENOMIC DNA]</scope>
    <source>
        <strain>NBRC 101917 / NGR234</strain>
    </source>
</reference>